<protein>
    <recommendedName>
        <fullName evidence="1">4-diphosphocytidyl-2-C-methyl-D-erythritol kinase</fullName>
        <shortName evidence="1">CMK</shortName>
        <ecNumber evidence="1">2.7.1.148</ecNumber>
    </recommendedName>
    <alternativeName>
        <fullName evidence="1">4-(cytidine-5'-diphospho)-2-C-methyl-D-erythritol kinase</fullName>
    </alternativeName>
</protein>
<keyword id="KW-0067">ATP-binding</keyword>
<keyword id="KW-0414">Isoprene biosynthesis</keyword>
<keyword id="KW-0418">Kinase</keyword>
<keyword id="KW-0547">Nucleotide-binding</keyword>
<keyword id="KW-0808">Transferase</keyword>
<comment type="function">
    <text evidence="1">Catalyzes the phosphorylation of the position 2 hydroxy group of 4-diphosphocytidyl-2C-methyl-D-erythritol.</text>
</comment>
<comment type="catalytic activity">
    <reaction evidence="1">
        <text>4-CDP-2-C-methyl-D-erythritol + ATP = 4-CDP-2-C-methyl-D-erythritol 2-phosphate + ADP + H(+)</text>
        <dbReference type="Rhea" id="RHEA:18437"/>
        <dbReference type="ChEBI" id="CHEBI:15378"/>
        <dbReference type="ChEBI" id="CHEBI:30616"/>
        <dbReference type="ChEBI" id="CHEBI:57823"/>
        <dbReference type="ChEBI" id="CHEBI:57919"/>
        <dbReference type="ChEBI" id="CHEBI:456216"/>
        <dbReference type="EC" id="2.7.1.148"/>
    </reaction>
</comment>
<comment type="pathway">
    <text evidence="1">Isoprenoid biosynthesis; isopentenyl diphosphate biosynthesis via DXP pathway; isopentenyl diphosphate from 1-deoxy-D-xylulose 5-phosphate: step 3/6.</text>
</comment>
<comment type="subunit">
    <text evidence="1">Homodimer.</text>
</comment>
<comment type="similarity">
    <text evidence="1">Belongs to the GHMP kinase family. IspE subfamily.</text>
</comment>
<name>ISPE_SALPC</name>
<sequence length="283" mass="30941">MMTHWPSPAKLNLFLYITGQRADGYHTLQTLFQFLDYGDTLHIEPRHDGEIHLLTPVNDVENEDNLIVRAARLLMKVASESGRLPAGSGADISIEKRLPMGGGLGGGSSNAATVLVALNHLWQCGLSIDELATLGLTLGADVPVFVRGHAAFAEGVGEILTPVNPPEKWYLVAHPGVSIPTPVIFKDPQLPRNTPKRSIDTLLKCEFSNDCEVIARKRFREVDAALSWLLEYAPSRLTGTGACVFAEFDTESCARQVLEQAPEWLNAFVAKGVNLSPLHRELL</sequence>
<evidence type="ECO:0000255" key="1">
    <source>
        <dbReference type="HAMAP-Rule" id="MF_00061"/>
    </source>
</evidence>
<gene>
    <name evidence="1" type="primary">ispE</name>
    <name type="ordered locus">SPC_1953</name>
</gene>
<accession>C0Q357</accession>
<organism>
    <name type="scientific">Salmonella paratyphi C (strain RKS4594)</name>
    <dbReference type="NCBI Taxonomy" id="476213"/>
    <lineage>
        <taxon>Bacteria</taxon>
        <taxon>Pseudomonadati</taxon>
        <taxon>Pseudomonadota</taxon>
        <taxon>Gammaproteobacteria</taxon>
        <taxon>Enterobacterales</taxon>
        <taxon>Enterobacteriaceae</taxon>
        <taxon>Salmonella</taxon>
    </lineage>
</organism>
<feature type="chain" id="PRO_1000190698" description="4-diphosphocytidyl-2-C-methyl-D-erythritol kinase">
    <location>
        <begin position="1"/>
        <end position="283"/>
    </location>
</feature>
<feature type="active site" evidence="1">
    <location>
        <position position="10"/>
    </location>
</feature>
<feature type="active site" evidence="1">
    <location>
        <position position="141"/>
    </location>
</feature>
<feature type="binding site" evidence="1">
    <location>
        <begin position="99"/>
        <end position="109"/>
    </location>
    <ligand>
        <name>ATP</name>
        <dbReference type="ChEBI" id="CHEBI:30616"/>
    </ligand>
</feature>
<dbReference type="EC" id="2.7.1.148" evidence="1"/>
<dbReference type="EMBL" id="CP000857">
    <property type="protein sequence ID" value="ACN46089.1"/>
    <property type="molecule type" value="Genomic_DNA"/>
</dbReference>
<dbReference type="RefSeq" id="WP_000988241.1">
    <property type="nucleotide sequence ID" value="NC_012125.1"/>
</dbReference>
<dbReference type="SMR" id="C0Q357"/>
<dbReference type="KEGG" id="sei:SPC_1953"/>
<dbReference type="HOGENOM" id="CLU_053057_3_0_6"/>
<dbReference type="UniPathway" id="UPA00056">
    <property type="reaction ID" value="UER00094"/>
</dbReference>
<dbReference type="Proteomes" id="UP000001599">
    <property type="component" value="Chromosome"/>
</dbReference>
<dbReference type="GO" id="GO:0050515">
    <property type="term" value="F:4-(cytidine 5'-diphospho)-2-C-methyl-D-erythritol kinase activity"/>
    <property type="evidence" value="ECO:0007669"/>
    <property type="project" value="UniProtKB-UniRule"/>
</dbReference>
<dbReference type="GO" id="GO:0005524">
    <property type="term" value="F:ATP binding"/>
    <property type="evidence" value="ECO:0007669"/>
    <property type="project" value="UniProtKB-UniRule"/>
</dbReference>
<dbReference type="GO" id="GO:0019288">
    <property type="term" value="P:isopentenyl diphosphate biosynthetic process, methylerythritol 4-phosphate pathway"/>
    <property type="evidence" value="ECO:0007669"/>
    <property type="project" value="UniProtKB-UniRule"/>
</dbReference>
<dbReference type="GO" id="GO:0016114">
    <property type="term" value="P:terpenoid biosynthetic process"/>
    <property type="evidence" value="ECO:0007669"/>
    <property type="project" value="InterPro"/>
</dbReference>
<dbReference type="FunFam" id="3.30.230.10:FF:000022">
    <property type="entry name" value="4-diphosphocytidyl-2-C-methyl-D-erythritol kinase"/>
    <property type="match status" value="1"/>
</dbReference>
<dbReference type="FunFam" id="3.30.70.890:FF:000004">
    <property type="entry name" value="4-diphosphocytidyl-2-C-methyl-D-erythritol kinase"/>
    <property type="match status" value="1"/>
</dbReference>
<dbReference type="Gene3D" id="3.30.230.10">
    <property type="match status" value="1"/>
</dbReference>
<dbReference type="Gene3D" id="3.30.70.890">
    <property type="entry name" value="GHMP kinase, C-terminal domain"/>
    <property type="match status" value="1"/>
</dbReference>
<dbReference type="HAMAP" id="MF_00061">
    <property type="entry name" value="IspE"/>
    <property type="match status" value="1"/>
</dbReference>
<dbReference type="InterPro" id="IPR013750">
    <property type="entry name" value="GHMP_kinase_C_dom"/>
</dbReference>
<dbReference type="InterPro" id="IPR036554">
    <property type="entry name" value="GHMP_kinase_C_sf"/>
</dbReference>
<dbReference type="InterPro" id="IPR006204">
    <property type="entry name" value="GHMP_kinase_N_dom"/>
</dbReference>
<dbReference type="InterPro" id="IPR004424">
    <property type="entry name" value="IspE"/>
</dbReference>
<dbReference type="InterPro" id="IPR020568">
    <property type="entry name" value="Ribosomal_Su5_D2-typ_SF"/>
</dbReference>
<dbReference type="InterPro" id="IPR014721">
    <property type="entry name" value="Ribsml_uS5_D2-typ_fold_subgr"/>
</dbReference>
<dbReference type="NCBIfam" id="TIGR00154">
    <property type="entry name" value="ispE"/>
    <property type="match status" value="1"/>
</dbReference>
<dbReference type="PANTHER" id="PTHR43527">
    <property type="entry name" value="4-DIPHOSPHOCYTIDYL-2-C-METHYL-D-ERYTHRITOL KINASE, CHLOROPLASTIC"/>
    <property type="match status" value="1"/>
</dbReference>
<dbReference type="PANTHER" id="PTHR43527:SF2">
    <property type="entry name" value="4-DIPHOSPHOCYTIDYL-2-C-METHYL-D-ERYTHRITOL KINASE, CHLOROPLASTIC"/>
    <property type="match status" value="1"/>
</dbReference>
<dbReference type="Pfam" id="PF08544">
    <property type="entry name" value="GHMP_kinases_C"/>
    <property type="match status" value="1"/>
</dbReference>
<dbReference type="Pfam" id="PF00288">
    <property type="entry name" value="GHMP_kinases_N"/>
    <property type="match status" value="1"/>
</dbReference>
<dbReference type="PIRSF" id="PIRSF010376">
    <property type="entry name" value="IspE"/>
    <property type="match status" value="1"/>
</dbReference>
<dbReference type="SUPFAM" id="SSF55060">
    <property type="entry name" value="GHMP Kinase, C-terminal domain"/>
    <property type="match status" value="1"/>
</dbReference>
<dbReference type="SUPFAM" id="SSF54211">
    <property type="entry name" value="Ribosomal protein S5 domain 2-like"/>
    <property type="match status" value="1"/>
</dbReference>
<proteinExistence type="inferred from homology"/>
<reference key="1">
    <citation type="journal article" date="2009" name="PLoS ONE">
        <title>Salmonella paratyphi C: genetic divergence from Salmonella choleraesuis and pathogenic convergence with Salmonella typhi.</title>
        <authorList>
            <person name="Liu W.-Q."/>
            <person name="Feng Y."/>
            <person name="Wang Y."/>
            <person name="Zou Q.-H."/>
            <person name="Chen F."/>
            <person name="Guo J.-T."/>
            <person name="Peng Y.-H."/>
            <person name="Jin Y."/>
            <person name="Li Y.-G."/>
            <person name="Hu S.-N."/>
            <person name="Johnston R.N."/>
            <person name="Liu G.-R."/>
            <person name="Liu S.-L."/>
        </authorList>
    </citation>
    <scope>NUCLEOTIDE SEQUENCE [LARGE SCALE GENOMIC DNA]</scope>
    <source>
        <strain>RKS4594</strain>
    </source>
</reference>